<keyword id="KW-0156">Chromatin regulator</keyword>
<keyword id="KW-0158">Chromosome</keyword>
<keyword id="KW-0963">Cytoplasm</keyword>
<keyword id="KW-0509">mRNA transport</keyword>
<keyword id="KW-0539">Nucleus</keyword>
<keyword id="KW-1185">Reference proteome</keyword>
<keyword id="KW-0677">Repeat</keyword>
<keyword id="KW-0694">RNA-binding</keyword>
<keyword id="KW-0779">Telomere</keyword>
<keyword id="KW-0810">Translation regulation</keyword>
<keyword id="KW-0813">Transport</keyword>
<protein>
    <recommendedName>
        <fullName>Heterogeneous nuclear rnp K-like protein 2</fullName>
    </recommendedName>
    <alternativeName>
        <fullName>KH domain-containing protein 1</fullName>
    </alternativeName>
</protein>
<name>HEK2_VANPO</name>
<accession>A7TT46</accession>
<gene>
    <name type="primary">HEK2</name>
    <name type="synonym">KHD1</name>
    <name type="ORF">Kpol_292p3</name>
</gene>
<comment type="function">
    <text evidence="1">RNA-binding protein involved in the correct localization of transcripts in the cell. RNA localization is a widespread mechanism for achieving localized protein synthesis. Involved in structural and functional organization of telomeric chromatin and regulates silencing at the HMR locus (By similarity).</text>
</comment>
<comment type="subunit">
    <text evidence="1">Binds RNA.</text>
</comment>
<comment type="subcellular location">
    <subcellularLocation>
        <location evidence="1">Cytoplasm</location>
    </subcellularLocation>
    <subcellularLocation>
        <location evidence="1">Cytoplasm</location>
        <location evidence="1">P-body</location>
    </subcellularLocation>
    <subcellularLocation>
        <location evidence="1">Nucleus</location>
    </subcellularLocation>
    <subcellularLocation>
        <location evidence="1">Chromosome</location>
        <location evidence="1">Telomere</location>
    </subcellularLocation>
</comment>
<comment type="similarity">
    <text evidence="3">Belongs to the HEK2 family.</text>
</comment>
<proteinExistence type="inferred from homology"/>
<reference key="1">
    <citation type="journal article" date="2007" name="Proc. Natl. Acad. Sci. U.S.A.">
        <title>Independent sorting-out of thousands of duplicated gene pairs in two yeast species descended from a whole-genome duplication.</title>
        <authorList>
            <person name="Scannell D.R."/>
            <person name="Frank A.C."/>
            <person name="Conant G.C."/>
            <person name="Byrne K.P."/>
            <person name="Woolfit M."/>
            <person name="Wolfe K.H."/>
        </authorList>
    </citation>
    <scope>NUCLEOTIDE SEQUENCE [LARGE SCALE GENOMIC DNA]</scope>
    <source>
        <strain>ATCC 22028 / DSM 70294 / BCRC 21397 / CBS 2163 / NBRC 10782 / NRRL Y-8283 / UCD 57-17</strain>
    </source>
</reference>
<feature type="chain" id="PRO_0000408191" description="Heterogeneous nuclear rnp K-like protein 2">
    <location>
        <begin position="1"/>
        <end position="336"/>
    </location>
</feature>
<feature type="domain" description="KH 1" evidence="2">
    <location>
        <begin position="17"/>
        <end position="81"/>
    </location>
</feature>
<feature type="domain" description="KH 2" evidence="2">
    <location>
        <begin position="139"/>
        <end position="204"/>
    </location>
</feature>
<feature type="domain" description="KH 3" evidence="2">
    <location>
        <begin position="248"/>
        <end position="316"/>
    </location>
</feature>
<dbReference type="EMBL" id="DS480542">
    <property type="protein sequence ID" value="EDO14561.1"/>
    <property type="molecule type" value="Genomic_DNA"/>
</dbReference>
<dbReference type="RefSeq" id="XP_001642419.1">
    <property type="nucleotide sequence ID" value="XM_001642369.1"/>
</dbReference>
<dbReference type="SMR" id="A7TT46"/>
<dbReference type="FunCoup" id="A7TT46">
    <property type="interactions" value="277"/>
</dbReference>
<dbReference type="STRING" id="436907.A7TT46"/>
<dbReference type="GeneID" id="5542573"/>
<dbReference type="KEGG" id="vpo:Kpol_292p3"/>
<dbReference type="eggNOG" id="KOG2190">
    <property type="taxonomic scope" value="Eukaryota"/>
</dbReference>
<dbReference type="HOGENOM" id="CLU_022670_2_0_1"/>
<dbReference type="InParanoid" id="A7TT46"/>
<dbReference type="OMA" id="TERSYFP"/>
<dbReference type="OrthoDB" id="442947at2759"/>
<dbReference type="PhylomeDB" id="A7TT46"/>
<dbReference type="Proteomes" id="UP000000267">
    <property type="component" value="Unassembled WGS sequence"/>
</dbReference>
<dbReference type="GO" id="GO:0000781">
    <property type="term" value="C:chromosome, telomeric region"/>
    <property type="evidence" value="ECO:0007669"/>
    <property type="project" value="UniProtKB-SubCell"/>
</dbReference>
<dbReference type="GO" id="GO:0005634">
    <property type="term" value="C:nucleus"/>
    <property type="evidence" value="ECO:0007669"/>
    <property type="project" value="UniProtKB-SubCell"/>
</dbReference>
<dbReference type="GO" id="GO:0000932">
    <property type="term" value="C:P-body"/>
    <property type="evidence" value="ECO:0007669"/>
    <property type="project" value="UniProtKB-SubCell"/>
</dbReference>
<dbReference type="GO" id="GO:0003723">
    <property type="term" value="F:RNA binding"/>
    <property type="evidence" value="ECO:0007669"/>
    <property type="project" value="UniProtKB-KW"/>
</dbReference>
<dbReference type="GO" id="GO:0006325">
    <property type="term" value="P:chromatin organization"/>
    <property type="evidence" value="ECO:0007669"/>
    <property type="project" value="UniProtKB-KW"/>
</dbReference>
<dbReference type="GO" id="GO:0051028">
    <property type="term" value="P:mRNA transport"/>
    <property type="evidence" value="ECO:0007669"/>
    <property type="project" value="UniProtKB-KW"/>
</dbReference>
<dbReference type="GO" id="GO:0006417">
    <property type="term" value="P:regulation of translation"/>
    <property type="evidence" value="ECO:0007669"/>
    <property type="project" value="UniProtKB-KW"/>
</dbReference>
<dbReference type="Gene3D" id="3.30.1370.10">
    <property type="entry name" value="K Homology domain, type 1"/>
    <property type="match status" value="3"/>
</dbReference>
<dbReference type="InterPro" id="IPR004087">
    <property type="entry name" value="KH_dom"/>
</dbReference>
<dbReference type="InterPro" id="IPR004088">
    <property type="entry name" value="KH_dom_type_1"/>
</dbReference>
<dbReference type="InterPro" id="IPR036612">
    <property type="entry name" value="KH_dom_type_1_sf"/>
</dbReference>
<dbReference type="PANTHER" id="PTHR10288">
    <property type="entry name" value="KH DOMAIN CONTAINING RNA BINDING PROTEIN"/>
    <property type="match status" value="1"/>
</dbReference>
<dbReference type="Pfam" id="PF00013">
    <property type="entry name" value="KH_1"/>
    <property type="match status" value="3"/>
</dbReference>
<dbReference type="SMART" id="SM00322">
    <property type="entry name" value="KH"/>
    <property type="match status" value="3"/>
</dbReference>
<dbReference type="SUPFAM" id="SSF54791">
    <property type="entry name" value="Eukaryotic type KH-domain (KH-domain type I)"/>
    <property type="match status" value="3"/>
</dbReference>
<dbReference type="PROSITE" id="PS50084">
    <property type="entry name" value="KH_TYPE_1"/>
    <property type="match status" value="3"/>
</dbReference>
<organism>
    <name type="scientific">Vanderwaltozyma polyspora (strain ATCC 22028 / DSM 70294 / BCRC 21397 / CBS 2163 / NBRC 10782 / NRRL Y-8283 / UCD 57-17)</name>
    <name type="common">Kluyveromyces polysporus</name>
    <dbReference type="NCBI Taxonomy" id="436907"/>
    <lineage>
        <taxon>Eukaryota</taxon>
        <taxon>Fungi</taxon>
        <taxon>Dikarya</taxon>
        <taxon>Ascomycota</taxon>
        <taxon>Saccharomycotina</taxon>
        <taxon>Saccharomycetes</taxon>
        <taxon>Saccharomycetales</taxon>
        <taxon>Saccharomycetaceae</taxon>
        <taxon>Vanderwaltozyma</taxon>
    </lineage>
</organism>
<evidence type="ECO:0000250" key="1"/>
<evidence type="ECO:0000255" key="2">
    <source>
        <dbReference type="PROSITE-ProRule" id="PRU00117"/>
    </source>
</evidence>
<evidence type="ECO:0000305" key="3"/>
<sequence length="336" mass="37792">MSDSDSENKQTTTTATSVTQRLLLSLKEAAKIIGTKGTKIQKVRDDNNVKIGISERKERCSDRILICTGSIEDVSNAIGDICEILLSEDVVTNDEDSNEKENDEYNSIEDEKFVYPFLNFRLAKPTLDEVNDAETLKKIINIRVLVTRAQCSAIIGTKGDRIKSLIENRGVRMIASNQTLPDSDERLLEIQGTSMAITKVLEDINAVISNEVRATREKRYVPHVRRRNQPVSTNTSSNTGSSKSFDEEFKSIVKIPEAYVGAIVGRQGNRIANLRKYSKTKIVIEKRASEVSDDAERIFEIISNDIKNVELAESMLKKNLETEIQRRKEMEETESA</sequence>